<protein>
    <recommendedName>
        <fullName>Protein PAT1 homolog 2</fullName>
    </recommendedName>
    <alternativeName>
        <fullName>PAT1-like protein 2</fullName>
    </alternativeName>
    <alternativeName>
        <fullName>Protein PAT1 homolog a</fullName>
        <shortName>Pat1a</shortName>
    </alternativeName>
</protein>
<name>PATL2_MOUSE</name>
<gene>
    <name type="primary">Patl2</name>
</gene>
<comment type="function">
    <text evidence="2">RNA-binding protein that acts as a translational repressor.</text>
</comment>
<comment type="subunit">
    <text evidence="1">Interacts with LSM1.</text>
</comment>
<comment type="subcellular location">
    <subcellularLocation>
        <location evidence="4">Cytoplasm</location>
    </subcellularLocation>
    <subcellularLocation>
        <location evidence="4">Nucleus</location>
    </subcellularLocation>
</comment>
<comment type="similarity">
    <text evidence="5">Belongs to the PAT1 family.</text>
</comment>
<comment type="sequence caution" evidence="5">
    <conflict type="frameshift">
        <sequence resource="EMBL-CDS" id="BAB29742"/>
    </conflict>
</comment>
<reference key="1">
    <citation type="journal article" date="2005" name="Science">
        <title>The transcriptional landscape of the mammalian genome.</title>
        <authorList>
            <person name="Carninci P."/>
            <person name="Kasukawa T."/>
            <person name="Katayama S."/>
            <person name="Gough J."/>
            <person name="Frith M.C."/>
            <person name="Maeda N."/>
            <person name="Oyama R."/>
            <person name="Ravasi T."/>
            <person name="Lenhard B."/>
            <person name="Wells C."/>
            <person name="Kodzius R."/>
            <person name="Shimokawa K."/>
            <person name="Bajic V.B."/>
            <person name="Brenner S.E."/>
            <person name="Batalov S."/>
            <person name="Forrest A.R."/>
            <person name="Zavolan M."/>
            <person name="Davis M.J."/>
            <person name="Wilming L.G."/>
            <person name="Aidinis V."/>
            <person name="Allen J.E."/>
            <person name="Ambesi-Impiombato A."/>
            <person name="Apweiler R."/>
            <person name="Aturaliya R.N."/>
            <person name="Bailey T.L."/>
            <person name="Bansal M."/>
            <person name="Baxter L."/>
            <person name="Beisel K.W."/>
            <person name="Bersano T."/>
            <person name="Bono H."/>
            <person name="Chalk A.M."/>
            <person name="Chiu K.P."/>
            <person name="Choudhary V."/>
            <person name="Christoffels A."/>
            <person name="Clutterbuck D.R."/>
            <person name="Crowe M.L."/>
            <person name="Dalla E."/>
            <person name="Dalrymple B.P."/>
            <person name="de Bono B."/>
            <person name="Della Gatta G."/>
            <person name="di Bernardo D."/>
            <person name="Down T."/>
            <person name="Engstrom P."/>
            <person name="Fagiolini M."/>
            <person name="Faulkner G."/>
            <person name="Fletcher C.F."/>
            <person name="Fukushima T."/>
            <person name="Furuno M."/>
            <person name="Futaki S."/>
            <person name="Gariboldi M."/>
            <person name="Georgii-Hemming P."/>
            <person name="Gingeras T.R."/>
            <person name="Gojobori T."/>
            <person name="Green R.E."/>
            <person name="Gustincich S."/>
            <person name="Harbers M."/>
            <person name="Hayashi Y."/>
            <person name="Hensch T.K."/>
            <person name="Hirokawa N."/>
            <person name="Hill D."/>
            <person name="Huminiecki L."/>
            <person name="Iacono M."/>
            <person name="Ikeo K."/>
            <person name="Iwama A."/>
            <person name="Ishikawa T."/>
            <person name="Jakt M."/>
            <person name="Kanapin A."/>
            <person name="Katoh M."/>
            <person name="Kawasawa Y."/>
            <person name="Kelso J."/>
            <person name="Kitamura H."/>
            <person name="Kitano H."/>
            <person name="Kollias G."/>
            <person name="Krishnan S.P."/>
            <person name="Kruger A."/>
            <person name="Kummerfeld S.K."/>
            <person name="Kurochkin I.V."/>
            <person name="Lareau L.F."/>
            <person name="Lazarevic D."/>
            <person name="Lipovich L."/>
            <person name="Liu J."/>
            <person name="Liuni S."/>
            <person name="McWilliam S."/>
            <person name="Madan Babu M."/>
            <person name="Madera M."/>
            <person name="Marchionni L."/>
            <person name="Matsuda H."/>
            <person name="Matsuzawa S."/>
            <person name="Miki H."/>
            <person name="Mignone F."/>
            <person name="Miyake S."/>
            <person name="Morris K."/>
            <person name="Mottagui-Tabar S."/>
            <person name="Mulder N."/>
            <person name="Nakano N."/>
            <person name="Nakauchi H."/>
            <person name="Ng P."/>
            <person name="Nilsson R."/>
            <person name="Nishiguchi S."/>
            <person name="Nishikawa S."/>
            <person name="Nori F."/>
            <person name="Ohara O."/>
            <person name="Okazaki Y."/>
            <person name="Orlando V."/>
            <person name="Pang K.C."/>
            <person name="Pavan W.J."/>
            <person name="Pavesi G."/>
            <person name="Pesole G."/>
            <person name="Petrovsky N."/>
            <person name="Piazza S."/>
            <person name="Reed J."/>
            <person name="Reid J.F."/>
            <person name="Ring B.Z."/>
            <person name="Ringwald M."/>
            <person name="Rost B."/>
            <person name="Ruan Y."/>
            <person name="Salzberg S.L."/>
            <person name="Sandelin A."/>
            <person name="Schneider C."/>
            <person name="Schoenbach C."/>
            <person name="Sekiguchi K."/>
            <person name="Semple C.A."/>
            <person name="Seno S."/>
            <person name="Sessa L."/>
            <person name="Sheng Y."/>
            <person name="Shibata Y."/>
            <person name="Shimada H."/>
            <person name="Shimada K."/>
            <person name="Silva D."/>
            <person name="Sinclair B."/>
            <person name="Sperling S."/>
            <person name="Stupka E."/>
            <person name="Sugiura K."/>
            <person name="Sultana R."/>
            <person name="Takenaka Y."/>
            <person name="Taki K."/>
            <person name="Tammoja K."/>
            <person name="Tan S.L."/>
            <person name="Tang S."/>
            <person name="Taylor M.S."/>
            <person name="Tegner J."/>
            <person name="Teichmann S.A."/>
            <person name="Ueda H.R."/>
            <person name="van Nimwegen E."/>
            <person name="Verardo R."/>
            <person name="Wei C.L."/>
            <person name="Yagi K."/>
            <person name="Yamanishi H."/>
            <person name="Zabarovsky E."/>
            <person name="Zhu S."/>
            <person name="Zimmer A."/>
            <person name="Hide W."/>
            <person name="Bult C."/>
            <person name="Grimmond S.M."/>
            <person name="Teasdale R.D."/>
            <person name="Liu E.T."/>
            <person name="Brusic V."/>
            <person name="Quackenbush J."/>
            <person name="Wahlestedt C."/>
            <person name="Mattick J.S."/>
            <person name="Hume D.A."/>
            <person name="Kai C."/>
            <person name="Sasaki D."/>
            <person name="Tomaru Y."/>
            <person name="Fukuda S."/>
            <person name="Kanamori-Katayama M."/>
            <person name="Suzuki M."/>
            <person name="Aoki J."/>
            <person name="Arakawa T."/>
            <person name="Iida J."/>
            <person name="Imamura K."/>
            <person name="Itoh M."/>
            <person name="Kato T."/>
            <person name="Kawaji H."/>
            <person name="Kawagashira N."/>
            <person name="Kawashima T."/>
            <person name="Kojima M."/>
            <person name="Kondo S."/>
            <person name="Konno H."/>
            <person name="Nakano K."/>
            <person name="Ninomiya N."/>
            <person name="Nishio T."/>
            <person name="Okada M."/>
            <person name="Plessy C."/>
            <person name="Shibata K."/>
            <person name="Shiraki T."/>
            <person name="Suzuki S."/>
            <person name="Tagami M."/>
            <person name="Waki K."/>
            <person name="Watahiki A."/>
            <person name="Okamura-Oho Y."/>
            <person name="Suzuki H."/>
            <person name="Kawai J."/>
            <person name="Hayashizaki Y."/>
        </authorList>
    </citation>
    <scope>NUCLEOTIDE SEQUENCE [LARGE SCALE MRNA]</scope>
    <source>
        <strain>C57BL/6J</strain>
        <tissue>Testis</tissue>
    </source>
</reference>
<reference key="2">
    <citation type="journal article" date="2009" name="PLoS Biol.">
        <title>Lineage-specific biology revealed by a finished genome assembly of the mouse.</title>
        <authorList>
            <person name="Church D.M."/>
            <person name="Goodstadt L."/>
            <person name="Hillier L.W."/>
            <person name="Zody M.C."/>
            <person name="Goldstein S."/>
            <person name="She X."/>
            <person name="Bult C.J."/>
            <person name="Agarwala R."/>
            <person name="Cherry J.L."/>
            <person name="DiCuccio M."/>
            <person name="Hlavina W."/>
            <person name="Kapustin Y."/>
            <person name="Meric P."/>
            <person name="Maglott D."/>
            <person name="Birtle Z."/>
            <person name="Marques A.C."/>
            <person name="Graves T."/>
            <person name="Zhou S."/>
            <person name="Teague B."/>
            <person name="Potamousis K."/>
            <person name="Churas C."/>
            <person name="Place M."/>
            <person name="Herschleb J."/>
            <person name="Runnheim R."/>
            <person name="Forrest D."/>
            <person name="Amos-Landgraf J."/>
            <person name="Schwartz D.C."/>
            <person name="Cheng Z."/>
            <person name="Lindblad-Toh K."/>
            <person name="Eichler E.E."/>
            <person name="Ponting C.P."/>
        </authorList>
    </citation>
    <scope>NUCLEOTIDE SEQUENCE [LARGE SCALE GENOMIC DNA]</scope>
    <source>
        <strain>C57BL/6J</strain>
    </source>
</reference>
<reference key="3">
    <citation type="journal article" date="2004" name="Genome Res.">
        <title>The status, quality, and expansion of the NIH full-length cDNA project: the Mammalian Gene Collection (MGC).</title>
        <authorList>
            <consortium name="The MGC Project Team"/>
        </authorList>
    </citation>
    <scope>NUCLEOTIDE SEQUENCE [LARGE SCALE MRNA]</scope>
    <source>
        <tissue>Brain</tissue>
    </source>
</reference>
<reference key="4">
    <citation type="journal article" date="2010" name="RNA">
        <title>Distinct functions of maternal and somatic Pat1 protein paralogs.</title>
        <authorList>
            <person name="Marnef A."/>
            <person name="Maldonado M."/>
            <person name="Bugaut A."/>
            <person name="Balasubramanian S."/>
            <person name="Kress M."/>
            <person name="Weil D."/>
            <person name="Standart N."/>
        </authorList>
    </citation>
    <scope>SUBCELLULAR LOCATION</scope>
</reference>
<dbReference type="EMBL" id="AK015195">
    <property type="protein sequence ID" value="BAB29742.1"/>
    <property type="status" value="ALT_FRAME"/>
    <property type="molecule type" value="mRNA"/>
</dbReference>
<dbReference type="EMBL" id="AL845457">
    <property type="status" value="NOT_ANNOTATED_CDS"/>
    <property type="molecule type" value="Genomic_DNA"/>
</dbReference>
<dbReference type="EMBL" id="BC145646">
    <property type="protein sequence ID" value="AAI45647.1"/>
    <property type="molecule type" value="mRNA"/>
</dbReference>
<dbReference type="CCDS" id="CCDS16653.1"/>
<dbReference type="RefSeq" id="NP_080527.2">
    <property type="nucleotide sequence ID" value="NM_026251.2"/>
</dbReference>
<dbReference type="RefSeq" id="XP_017174713.1">
    <property type="nucleotide sequence ID" value="XM_017319224.2"/>
</dbReference>
<dbReference type="SMR" id="A2ARM1"/>
<dbReference type="FunCoup" id="A2ARM1">
    <property type="interactions" value="992"/>
</dbReference>
<dbReference type="STRING" id="10090.ENSMUSP00000028665"/>
<dbReference type="PhosphoSitePlus" id="A2ARM1"/>
<dbReference type="PaxDb" id="10090-ENSMUSP00000028665"/>
<dbReference type="Antibodypedia" id="63580">
    <property type="antibodies" value="72 antibodies from 13 providers"/>
</dbReference>
<dbReference type="DNASU" id="67578"/>
<dbReference type="Ensembl" id="ENSMUST00000028665.5">
    <property type="protein sequence ID" value="ENSMUSP00000028665.5"/>
    <property type="gene ID" value="ENSMUSG00000027233.5"/>
</dbReference>
<dbReference type="GeneID" id="67578"/>
<dbReference type="KEGG" id="mmu:67578"/>
<dbReference type="UCSC" id="uc008mae.1">
    <property type="organism name" value="mouse"/>
</dbReference>
<dbReference type="AGR" id="MGI:1914828"/>
<dbReference type="CTD" id="197135"/>
<dbReference type="MGI" id="MGI:1914828">
    <property type="gene designation" value="Patl2"/>
</dbReference>
<dbReference type="VEuPathDB" id="HostDB:ENSMUSG00000027233"/>
<dbReference type="eggNOG" id="KOG4592">
    <property type="taxonomic scope" value="Eukaryota"/>
</dbReference>
<dbReference type="GeneTree" id="ENSGT00520000055649"/>
<dbReference type="HOGENOM" id="CLU_009778_0_0_1"/>
<dbReference type="InParanoid" id="A2ARM1"/>
<dbReference type="OMA" id="WSQKPDP"/>
<dbReference type="OrthoDB" id="8251691at2759"/>
<dbReference type="PhylomeDB" id="A2ARM1"/>
<dbReference type="TreeFam" id="TF323322"/>
<dbReference type="BioGRID-ORCS" id="67578">
    <property type="hits" value="1 hit in 81 CRISPR screens"/>
</dbReference>
<dbReference type="ChiTaRS" id="Patl2">
    <property type="organism name" value="mouse"/>
</dbReference>
<dbReference type="PRO" id="PR:A2ARM1"/>
<dbReference type="Proteomes" id="UP000000589">
    <property type="component" value="Chromosome 2"/>
</dbReference>
<dbReference type="RNAct" id="A2ARM1">
    <property type="molecule type" value="protein"/>
</dbReference>
<dbReference type="Bgee" id="ENSMUSG00000027233">
    <property type="expression patterns" value="Expressed in primary oocyte and 21 other cell types or tissues"/>
</dbReference>
<dbReference type="GO" id="GO:0005737">
    <property type="term" value="C:cytoplasm"/>
    <property type="evidence" value="ECO:0000314"/>
    <property type="project" value="UniProtKB"/>
</dbReference>
<dbReference type="GO" id="GO:0005634">
    <property type="term" value="C:nucleus"/>
    <property type="evidence" value="ECO:0000314"/>
    <property type="project" value="UniProtKB"/>
</dbReference>
<dbReference type="GO" id="GO:0000932">
    <property type="term" value="C:P-body"/>
    <property type="evidence" value="ECO:0000314"/>
    <property type="project" value="MGI"/>
</dbReference>
<dbReference type="GO" id="GO:0002151">
    <property type="term" value="F:G-quadruplex RNA binding"/>
    <property type="evidence" value="ECO:0000266"/>
    <property type="project" value="MGI"/>
</dbReference>
<dbReference type="GO" id="GO:0034046">
    <property type="term" value="F:poly(G) binding"/>
    <property type="evidence" value="ECO:0000266"/>
    <property type="project" value="MGI"/>
</dbReference>
<dbReference type="GO" id="GO:0008266">
    <property type="term" value="F:poly(U) RNA binding"/>
    <property type="evidence" value="ECO:0000266"/>
    <property type="project" value="MGI"/>
</dbReference>
<dbReference type="GO" id="GO:0003723">
    <property type="term" value="F:RNA binding"/>
    <property type="evidence" value="ECO:0000250"/>
    <property type="project" value="UniProtKB"/>
</dbReference>
<dbReference type="GO" id="GO:0030371">
    <property type="term" value="F:translation repressor activity"/>
    <property type="evidence" value="ECO:0000266"/>
    <property type="project" value="MGI"/>
</dbReference>
<dbReference type="GO" id="GO:0000290">
    <property type="term" value="P:deadenylation-dependent decapping of nuclear-transcribed mRNA"/>
    <property type="evidence" value="ECO:0007669"/>
    <property type="project" value="InterPro"/>
</dbReference>
<dbReference type="GO" id="GO:0010607">
    <property type="term" value="P:negative regulation of cytoplasmic mRNA processing body assembly"/>
    <property type="evidence" value="ECO:0000314"/>
    <property type="project" value="MGI"/>
</dbReference>
<dbReference type="GO" id="GO:0017148">
    <property type="term" value="P:negative regulation of translation"/>
    <property type="evidence" value="ECO:0000250"/>
    <property type="project" value="UniProtKB"/>
</dbReference>
<dbReference type="InterPro" id="IPR039900">
    <property type="entry name" value="Pat1-like"/>
</dbReference>
<dbReference type="InterPro" id="IPR019167">
    <property type="entry name" value="PAT1_dom"/>
</dbReference>
<dbReference type="PANTHER" id="PTHR21551:SF3">
    <property type="entry name" value="PROTEIN PAT1 HOMOLOG 2"/>
    <property type="match status" value="1"/>
</dbReference>
<dbReference type="PANTHER" id="PTHR21551">
    <property type="entry name" value="TOPOISOMERASE II-ASSOCIATED PROTEIN PAT1"/>
    <property type="match status" value="1"/>
</dbReference>
<dbReference type="Pfam" id="PF09770">
    <property type="entry name" value="PAT1"/>
    <property type="match status" value="1"/>
</dbReference>
<organism>
    <name type="scientific">Mus musculus</name>
    <name type="common">Mouse</name>
    <dbReference type="NCBI Taxonomy" id="10090"/>
    <lineage>
        <taxon>Eukaryota</taxon>
        <taxon>Metazoa</taxon>
        <taxon>Chordata</taxon>
        <taxon>Craniata</taxon>
        <taxon>Vertebrata</taxon>
        <taxon>Euteleostomi</taxon>
        <taxon>Mammalia</taxon>
        <taxon>Eutheria</taxon>
        <taxon>Euarchontoglires</taxon>
        <taxon>Glires</taxon>
        <taxon>Rodentia</taxon>
        <taxon>Myomorpha</taxon>
        <taxon>Muroidea</taxon>
        <taxon>Muridae</taxon>
        <taxon>Murinae</taxon>
        <taxon>Mus</taxon>
        <taxon>Mus</taxon>
    </lineage>
</organism>
<evidence type="ECO:0000250" key="1">
    <source>
        <dbReference type="UniProtKB" id="C9JE40"/>
    </source>
</evidence>
<evidence type="ECO:0000250" key="2">
    <source>
        <dbReference type="UniProtKB" id="Q4V7K4"/>
    </source>
</evidence>
<evidence type="ECO:0000256" key="3">
    <source>
        <dbReference type="SAM" id="MobiDB-lite"/>
    </source>
</evidence>
<evidence type="ECO:0000269" key="4">
    <source>
    </source>
</evidence>
<evidence type="ECO:0000305" key="5"/>
<sequence>MKCLEGLHLQQRPSKFSVSLAPEEGLVCAFQLEEEKENEDECVCSDQAPEVKEEGCGLGDPAIVSAFQNTQVPQQRGLHSSHRVKVSGALGMSSASLHFMWQSVFPRASSPAHHFGPQQPSPDPFLFYSPLTPWPPKLSLPSHLTQLHPQHQQILQQQQRWRRRRSPTARSVPAQKPWSREPAASDAYANLMTRKEKDWVIRVQMVQLQSENPRLDDYYYQKYYQKLEKRQADKELLGQKTRAESLKLVTPYIQKPEVYESVVRIEGSLGQVAVSTCFSPRRAIDAVSHGTQEQDTGAASSQRLRVLSQIEKMFLQLLKIEEGQNDGLPQLYHTREQSSQVEKLFQALKTQEQNNLEEAADNLLQVLSVRKGKVLVARLLPFLPPDQAVSLLLYITYHLPLLIQRDMADQGLHMLFKPLGKYISHLTFHQLLHAMQGLMLLSPGSSERPVSVVLQNQFGISLLYALLSHGEQLVSLDPSLRSSSDCATWTDLVILIAWEIAQLPAASLAEPLAFPRNLLPCSAITWTSN</sequence>
<proteinExistence type="evidence at transcript level"/>
<feature type="chain" id="PRO_0000404578" description="Protein PAT1 homolog 2">
    <location>
        <begin position="1"/>
        <end position="529"/>
    </location>
</feature>
<feature type="region of interest" description="Disordered" evidence="3">
    <location>
        <begin position="153"/>
        <end position="183"/>
    </location>
</feature>
<feature type="sequence conflict" description="In Ref. 3; AAI45647." evidence="5" ref="3">
    <original>S</original>
    <variation>P</variation>
    <location>
        <position position="19"/>
    </location>
</feature>
<feature type="sequence conflict" description="In Ref. 3; AAI45647." evidence="5" ref="3">
    <original>E</original>
    <variation>K</variation>
    <location>
        <position position="41"/>
    </location>
</feature>
<feature type="sequence conflict" description="In Ref. 3; AAI45647." evidence="5" ref="3">
    <original>V</original>
    <variation>A</variation>
    <location>
        <position position="86"/>
    </location>
</feature>
<feature type="sequence conflict" description="In Ref. 3; AAI45647." evidence="5" ref="3">
    <original>L</original>
    <variation>LQ</variation>
    <location>
        <position position="155"/>
    </location>
</feature>
<feature type="sequence conflict" description="In Ref. 1; BAB29742." evidence="5" ref="1">
    <original>AESLK</original>
    <variation>VEFLQ</variation>
    <location>
        <begin position="243"/>
        <end position="247"/>
    </location>
</feature>
<feature type="sequence conflict" description="In Ref. 1; BAB29742." evidence="5" ref="1">
    <original>P</original>
    <variation>L</variation>
    <location>
        <position position="256"/>
    </location>
</feature>
<feature type="sequence conflict" description="In Ref. 3; AAI45647." evidence="5" ref="3">
    <original>K</original>
    <variation>E</variation>
    <location>
        <position position="343"/>
    </location>
</feature>
<keyword id="KW-0963">Cytoplasm</keyword>
<keyword id="KW-0539">Nucleus</keyword>
<keyword id="KW-1185">Reference proteome</keyword>
<keyword id="KW-0694">RNA-binding</keyword>
<accession>A2ARM1</accession>
<accession>A6H5U9</accession>
<accession>Q9D5L4</accession>